<sequence>MTRGKSFVTIKGTKDGLTFLLDDRCSFDELIKELTDKLSANYYKSGEEERPVYVKMDLGNRYLNEEDKAQLEAVVTEGRNMRIEHYDSGVISWEEAQLMKEHAQTTTLTRMIRSGQVVHVKGNVLLVGDINPGGLLTATGSIYVMGALKGRAHAGFEGKRDARICAAMMAPAGLQIADESLYFVDKDEAVEDHMKAAFLDEVNGSIRIERVQRLLDVAAEINKEAVS</sequence>
<keyword id="KW-0131">Cell cycle</keyword>
<keyword id="KW-0132">Cell division</keyword>
<keyword id="KW-1185">Reference proteome</keyword>
<keyword id="KW-0717">Septation</keyword>
<gene>
    <name evidence="1" type="primary">minC</name>
    <name type="ordered locus">ABC2611</name>
</gene>
<proteinExistence type="inferred from homology"/>
<organism>
    <name type="scientific">Shouchella clausii (strain KSM-K16)</name>
    <name type="common">Alkalihalobacillus clausii</name>
    <dbReference type="NCBI Taxonomy" id="66692"/>
    <lineage>
        <taxon>Bacteria</taxon>
        <taxon>Bacillati</taxon>
        <taxon>Bacillota</taxon>
        <taxon>Bacilli</taxon>
        <taxon>Bacillales</taxon>
        <taxon>Bacillaceae</taxon>
        <taxon>Shouchella</taxon>
    </lineage>
</organism>
<dbReference type="EMBL" id="AP006627">
    <property type="protein sequence ID" value="BAD65146.1"/>
    <property type="molecule type" value="Genomic_DNA"/>
</dbReference>
<dbReference type="RefSeq" id="WP_011247454.1">
    <property type="nucleotide sequence ID" value="NC_006582.1"/>
</dbReference>
<dbReference type="SMR" id="Q5WER4"/>
<dbReference type="STRING" id="66692.ABC2611"/>
<dbReference type="KEGG" id="bcl:ABC2611"/>
<dbReference type="eggNOG" id="COG0850">
    <property type="taxonomic scope" value="Bacteria"/>
</dbReference>
<dbReference type="HOGENOM" id="CLU_048711_1_1_9"/>
<dbReference type="OrthoDB" id="9790810at2"/>
<dbReference type="Proteomes" id="UP000001168">
    <property type="component" value="Chromosome"/>
</dbReference>
<dbReference type="GO" id="GO:0000902">
    <property type="term" value="P:cell morphogenesis"/>
    <property type="evidence" value="ECO:0007669"/>
    <property type="project" value="InterPro"/>
</dbReference>
<dbReference type="GO" id="GO:0000917">
    <property type="term" value="P:division septum assembly"/>
    <property type="evidence" value="ECO:0007669"/>
    <property type="project" value="UniProtKB-KW"/>
</dbReference>
<dbReference type="GO" id="GO:1901891">
    <property type="term" value="P:regulation of cell septum assembly"/>
    <property type="evidence" value="ECO:0007669"/>
    <property type="project" value="InterPro"/>
</dbReference>
<dbReference type="Gene3D" id="2.160.20.70">
    <property type="match status" value="1"/>
</dbReference>
<dbReference type="Gene3D" id="3.30.160.540">
    <property type="match status" value="1"/>
</dbReference>
<dbReference type="HAMAP" id="MF_00267">
    <property type="entry name" value="MinC"/>
    <property type="match status" value="1"/>
</dbReference>
<dbReference type="InterPro" id="IPR016098">
    <property type="entry name" value="CAP/MinC_C"/>
</dbReference>
<dbReference type="InterPro" id="IPR013033">
    <property type="entry name" value="MinC"/>
</dbReference>
<dbReference type="InterPro" id="IPR036145">
    <property type="entry name" value="MinC_C_sf"/>
</dbReference>
<dbReference type="InterPro" id="IPR055219">
    <property type="entry name" value="MinC_N_1"/>
</dbReference>
<dbReference type="InterPro" id="IPR005526">
    <property type="entry name" value="Septum_form_inhib_MinC_C"/>
</dbReference>
<dbReference type="NCBIfam" id="TIGR01222">
    <property type="entry name" value="minC"/>
    <property type="match status" value="1"/>
</dbReference>
<dbReference type="NCBIfam" id="NF001772">
    <property type="entry name" value="PRK00513.1-3"/>
    <property type="match status" value="1"/>
</dbReference>
<dbReference type="PANTHER" id="PTHR34108">
    <property type="entry name" value="SEPTUM SITE-DETERMINING PROTEIN MINC"/>
    <property type="match status" value="1"/>
</dbReference>
<dbReference type="PANTHER" id="PTHR34108:SF1">
    <property type="entry name" value="SEPTUM SITE-DETERMINING PROTEIN MINC"/>
    <property type="match status" value="1"/>
</dbReference>
<dbReference type="Pfam" id="PF03775">
    <property type="entry name" value="MinC_C"/>
    <property type="match status" value="1"/>
</dbReference>
<dbReference type="Pfam" id="PF22642">
    <property type="entry name" value="MinC_N_1"/>
    <property type="match status" value="1"/>
</dbReference>
<dbReference type="SUPFAM" id="SSF63848">
    <property type="entry name" value="Cell-division inhibitor MinC, C-terminal domain"/>
    <property type="match status" value="1"/>
</dbReference>
<accession>Q5WER4</accession>
<protein>
    <recommendedName>
        <fullName evidence="1">Probable septum site-determining protein MinC</fullName>
    </recommendedName>
</protein>
<evidence type="ECO:0000255" key="1">
    <source>
        <dbReference type="HAMAP-Rule" id="MF_00267"/>
    </source>
</evidence>
<name>MINC_SHOC1</name>
<feature type="chain" id="PRO_1000047803" description="Probable septum site-determining protein MinC">
    <location>
        <begin position="1"/>
        <end position="227"/>
    </location>
</feature>
<reference key="1">
    <citation type="submission" date="2003-10" db="EMBL/GenBank/DDBJ databases">
        <title>The complete genome sequence of the alkaliphilic Bacillus clausii KSM-K16.</title>
        <authorList>
            <person name="Takaki Y."/>
            <person name="Kageyama Y."/>
            <person name="Shimamura S."/>
            <person name="Suzuki H."/>
            <person name="Nishi S."/>
            <person name="Hatada Y."/>
            <person name="Kawai S."/>
            <person name="Ito S."/>
            <person name="Horikoshi K."/>
        </authorList>
    </citation>
    <scope>NUCLEOTIDE SEQUENCE [LARGE SCALE GENOMIC DNA]</scope>
    <source>
        <strain>KSM-K16</strain>
    </source>
</reference>
<comment type="function">
    <text evidence="1">Cell division inhibitor that blocks the formation of polar Z ring septums. Rapidly oscillates between the poles of the cell to destabilize FtsZ filaments that have formed before they mature into polar Z rings. Prevents FtsZ polymerization.</text>
</comment>
<comment type="subunit">
    <text evidence="1">Interacts with MinD and FtsZ.</text>
</comment>
<comment type="similarity">
    <text evidence="1">Belongs to the MinC family.</text>
</comment>